<gene>
    <name evidence="1" type="primary">rnhC</name>
    <name type="ordered locus">SpyM50286</name>
</gene>
<proteinExistence type="inferred from homology"/>
<organism>
    <name type="scientific">Streptococcus pyogenes serotype M5 (strain Manfredo)</name>
    <dbReference type="NCBI Taxonomy" id="160491"/>
    <lineage>
        <taxon>Bacteria</taxon>
        <taxon>Bacillati</taxon>
        <taxon>Bacillota</taxon>
        <taxon>Bacilli</taxon>
        <taxon>Lactobacillales</taxon>
        <taxon>Streptococcaceae</taxon>
        <taxon>Streptococcus</taxon>
    </lineage>
</organism>
<name>RNH3_STRPG</name>
<sequence>MNTLVLKIDTILSKHLKKQLAPYTISSQNTYVAFAAKKNGVTVLLYKSGKLVLQGNGANALAQELNLPVAKTVFEASNNSQDIPIIGSDEVGNGSYFGGIAVVASFVDPKDHSFLKKLGVDDSKKLSDKTIQQIAPLLEKQIPHQSLLLSPKKYNELVGKSKPYNAISIKVALHNQAIFLLLQKGIQPKQIVIDAFTSQSNYEKHLKKEKNHFPNPLTFQEKAESHYLAVAVSSIIARNLFLDNLDQLGQDLGYQLPSGAGSASDKVASQLLAAYGMSSLEYSAKLHFANTHKAQALLTK</sequence>
<keyword id="KW-0963">Cytoplasm</keyword>
<keyword id="KW-0255">Endonuclease</keyword>
<keyword id="KW-0378">Hydrolase</keyword>
<keyword id="KW-0460">Magnesium</keyword>
<keyword id="KW-0479">Metal-binding</keyword>
<keyword id="KW-0540">Nuclease</keyword>
<protein>
    <recommendedName>
        <fullName evidence="1">Ribonuclease HIII</fullName>
        <shortName evidence="1">RNase HIII</shortName>
        <ecNumber evidence="1">3.1.26.4</ecNumber>
    </recommendedName>
</protein>
<accession>A2RCQ5</accession>
<feature type="chain" id="PRO_1000031247" description="Ribonuclease HIII">
    <location>
        <begin position="1"/>
        <end position="300"/>
    </location>
</feature>
<feature type="domain" description="RNase H type-2" evidence="2">
    <location>
        <begin position="83"/>
        <end position="300"/>
    </location>
</feature>
<feature type="binding site" evidence="1">
    <location>
        <position position="89"/>
    </location>
    <ligand>
        <name>a divalent metal cation</name>
        <dbReference type="ChEBI" id="CHEBI:60240"/>
    </ligand>
</feature>
<feature type="binding site" evidence="1">
    <location>
        <position position="90"/>
    </location>
    <ligand>
        <name>a divalent metal cation</name>
        <dbReference type="ChEBI" id="CHEBI:60240"/>
    </ligand>
</feature>
<feature type="binding site" evidence="1">
    <location>
        <position position="194"/>
    </location>
    <ligand>
        <name>a divalent metal cation</name>
        <dbReference type="ChEBI" id="CHEBI:60240"/>
    </ligand>
</feature>
<dbReference type="EC" id="3.1.26.4" evidence="1"/>
<dbReference type="EMBL" id="AM295007">
    <property type="protein sequence ID" value="CAM29628.1"/>
    <property type="molecule type" value="Genomic_DNA"/>
</dbReference>
<dbReference type="RefSeq" id="WP_011888614.1">
    <property type="nucleotide sequence ID" value="NC_009332.1"/>
</dbReference>
<dbReference type="SMR" id="A2RCQ5"/>
<dbReference type="KEGG" id="spf:SpyM50286"/>
<dbReference type="HOGENOM" id="CLU_059546_1_0_9"/>
<dbReference type="GO" id="GO:0005737">
    <property type="term" value="C:cytoplasm"/>
    <property type="evidence" value="ECO:0007669"/>
    <property type="project" value="UniProtKB-SubCell"/>
</dbReference>
<dbReference type="GO" id="GO:0032299">
    <property type="term" value="C:ribonuclease H2 complex"/>
    <property type="evidence" value="ECO:0007669"/>
    <property type="project" value="TreeGrafter"/>
</dbReference>
<dbReference type="GO" id="GO:0000287">
    <property type="term" value="F:magnesium ion binding"/>
    <property type="evidence" value="ECO:0007669"/>
    <property type="project" value="UniProtKB-UniRule"/>
</dbReference>
<dbReference type="GO" id="GO:0003723">
    <property type="term" value="F:RNA binding"/>
    <property type="evidence" value="ECO:0007669"/>
    <property type="project" value="InterPro"/>
</dbReference>
<dbReference type="GO" id="GO:0004523">
    <property type="term" value="F:RNA-DNA hybrid ribonuclease activity"/>
    <property type="evidence" value="ECO:0007669"/>
    <property type="project" value="UniProtKB-UniRule"/>
</dbReference>
<dbReference type="GO" id="GO:0043137">
    <property type="term" value="P:DNA replication, removal of RNA primer"/>
    <property type="evidence" value="ECO:0007669"/>
    <property type="project" value="TreeGrafter"/>
</dbReference>
<dbReference type="GO" id="GO:0006298">
    <property type="term" value="P:mismatch repair"/>
    <property type="evidence" value="ECO:0007669"/>
    <property type="project" value="TreeGrafter"/>
</dbReference>
<dbReference type="CDD" id="cd06590">
    <property type="entry name" value="RNase_HII_bacteria_HIII_like"/>
    <property type="match status" value="1"/>
</dbReference>
<dbReference type="CDD" id="cd14796">
    <property type="entry name" value="RNAse_HIII_N"/>
    <property type="match status" value="1"/>
</dbReference>
<dbReference type="FunFam" id="3.30.420.10:FF:000047">
    <property type="entry name" value="Ribonuclease HIII"/>
    <property type="match status" value="1"/>
</dbReference>
<dbReference type="Gene3D" id="3.30.420.10">
    <property type="entry name" value="Ribonuclease H-like superfamily/Ribonuclease H"/>
    <property type="match status" value="1"/>
</dbReference>
<dbReference type="Gene3D" id="3.30.310.10">
    <property type="entry name" value="TATA-Binding Protein"/>
    <property type="match status" value="1"/>
</dbReference>
<dbReference type="HAMAP" id="MF_00053">
    <property type="entry name" value="RNase_HIII"/>
    <property type="match status" value="1"/>
</dbReference>
<dbReference type="InterPro" id="IPR001352">
    <property type="entry name" value="RNase_HII/HIII"/>
</dbReference>
<dbReference type="InterPro" id="IPR024567">
    <property type="entry name" value="RNase_HII/HIII_dom"/>
</dbReference>
<dbReference type="InterPro" id="IPR004641">
    <property type="entry name" value="RNase_HIII"/>
</dbReference>
<dbReference type="InterPro" id="IPR024568">
    <property type="entry name" value="RNase_HIII_N"/>
</dbReference>
<dbReference type="InterPro" id="IPR012337">
    <property type="entry name" value="RNaseH-like_sf"/>
</dbReference>
<dbReference type="InterPro" id="IPR036397">
    <property type="entry name" value="RNaseH_sf"/>
</dbReference>
<dbReference type="InterPro" id="IPR012295">
    <property type="entry name" value="TBP_dom_sf"/>
</dbReference>
<dbReference type="NCBIfam" id="TIGR00716">
    <property type="entry name" value="rnhC"/>
    <property type="match status" value="1"/>
</dbReference>
<dbReference type="PANTHER" id="PTHR10954:SF23">
    <property type="entry name" value="RIBONUCLEASE"/>
    <property type="match status" value="1"/>
</dbReference>
<dbReference type="PANTHER" id="PTHR10954">
    <property type="entry name" value="RIBONUCLEASE H2 SUBUNIT A"/>
    <property type="match status" value="1"/>
</dbReference>
<dbReference type="Pfam" id="PF11858">
    <property type="entry name" value="DUF3378"/>
    <property type="match status" value="1"/>
</dbReference>
<dbReference type="Pfam" id="PF01351">
    <property type="entry name" value="RNase_HII"/>
    <property type="match status" value="1"/>
</dbReference>
<dbReference type="PIRSF" id="PIRSF037748">
    <property type="entry name" value="RnhC"/>
    <property type="match status" value="1"/>
</dbReference>
<dbReference type="SUPFAM" id="SSF53098">
    <property type="entry name" value="Ribonuclease H-like"/>
    <property type="match status" value="1"/>
</dbReference>
<dbReference type="PROSITE" id="PS51975">
    <property type="entry name" value="RNASE_H_2"/>
    <property type="match status" value="1"/>
</dbReference>
<reference key="1">
    <citation type="journal article" date="2007" name="J. Bacteriol.">
        <title>Complete genome of acute rheumatic fever-associated serotype M5 Streptococcus pyogenes strain Manfredo.</title>
        <authorList>
            <person name="Holden M.T.G."/>
            <person name="Scott A."/>
            <person name="Cherevach I."/>
            <person name="Chillingworth T."/>
            <person name="Churcher C."/>
            <person name="Cronin A."/>
            <person name="Dowd L."/>
            <person name="Feltwell T."/>
            <person name="Hamlin N."/>
            <person name="Holroyd S."/>
            <person name="Jagels K."/>
            <person name="Moule S."/>
            <person name="Mungall K."/>
            <person name="Quail M.A."/>
            <person name="Price C."/>
            <person name="Rabbinowitsch E."/>
            <person name="Sharp S."/>
            <person name="Skelton J."/>
            <person name="Whitehead S."/>
            <person name="Barrell B.G."/>
            <person name="Kehoe M."/>
            <person name="Parkhill J."/>
        </authorList>
    </citation>
    <scope>NUCLEOTIDE SEQUENCE [LARGE SCALE GENOMIC DNA]</scope>
    <source>
        <strain>Manfredo</strain>
    </source>
</reference>
<comment type="function">
    <text evidence="1">Endonuclease that specifically degrades the RNA of RNA-DNA hybrids.</text>
</comment>
<comment type="catalytic activity">
    <reaction evidence="1">
        <text>Endonucleolytic cleavage to 5'-phosphomonoester.</text>
        <dbReference type="EC" id="3.1.26.4"/>
    </reaction>
</comment>
<comment type="cofactor">
    <cofactor evidence="1">
        <name>Mn(2+)</name>
        <dbReference type="ChEBI" id="CHEBI:29035"/>
    </cofactor>
    <cofactor evidence="1">
        <name>Mg(2+)</name>
        <dbReference type="ChEBI" id="CHEBI:18420"/>
    </cofactor>
    <text evidence="1">Manganese or magnesium. Binds 1 divalent metal ion per monomer in the absence of substrate. May bind a second metal ion after substrate binding.</text>
</comment>
<comment type="subcellular location">
    <subcellularLocation>
        <location evidence="1">Cytoplasm</location>
    </subcellularLocation>
</comment>
<comment type="similarity">
    <text evidence="1">Belongs to the RNase HII family. RnhC subfamily.</text>
</comment>
<evidence type="ECO:0000255" key="1">
    <source>
        <dbReference type="HAMAP-Rule" id="MF_00053"/>
    </source>
</evidence>
<evidence type="ECO:0000255" key="2">
    <source>
        <dbReference type="PROSITE-ProRule" id="PRU01319"/>
    </source>
</evidence>